<dbReference type="EMBL" id="M21951">
    <property type="protein sequence ID" value="AAA42778.1"/>
    <property type="molecule type" value="Genomic_RNA"/>
</dbReference>
<dbReference type="PIR" id="S07430">
    <property type="entry name" value="S07430"/>
</dbReference>
<dbReference type="SMR" id="P12430"/>
<dbReference type="GlyCosmos" id="P12430">
    <property type="glycosylation" value="4 sites, No reported glycans"/>
</dbReference>
<dbReference type="GO" id="GO:0044167">
    <property type="term" value="C:host cell endoplasmic reticulum membrane"/>
    <property type="evidence" value="ECO:0007669"/>
    <property type="project" value="UniProtKB-SubCell"/>
</dbReference>
<dbReference type="GO" id="GO:0044178">
    <property type="term" value="C:host cell Golgi membrane"/>
    <property type="evidence" value="ECO:0007669"/>
    <property type="project" value="UniProtKB-SubCell"/>
</dbReference>
<dbReference type="GO" id="GO:0016020">
    <property type="term" value="C:membrane"/>
    <property type="evidence" value="ECO:0007669"/>
    <property type="project" value="UniProtKB-KW"/>
</dbReference>
<dbReference type="GO" id="GO:0055036">
    <property type="term" value="C:virion membrane"/>
    <property type="evidence" value="ECO:0007669"/>
    <property type="project" value="UniProtKB-SubCell"/>
</dbReference>
<dbReference type="GO" id="GO:0039654">
    <property type="term" value="P:fusion of virus membrane with host endosome membrane"/>
    <property type="evidence" value="ECO:0007669"/>
    <property type="project" value="UniProtKB-KW"/>
</dbReference>
<dbReference type="GO" id="GO:0046718">
    <property type="term" value="P:symbiont entry into host cell"/>
    <property type="evidence" value="ECO:0007669"/>
    <property type="project" value="UniProtKB-KW"/>
</dbReference>
<dbReference type="GO" id="GO:0044003">
    <property type="term" value="P:symbiont-mediated perturbation of host process"/>
    <property type="evidence" value="ECO:0007669"/>
    <property type="project" value="InterPro"/>
</dbReference>
<dbReference type="GO" id="GO:0019062">
    <property type="term" value="P:virion attachment to host cell"/>
    <property type="evidence" value="ECO:0007669"/>
    <property type="project" value="UniProtKB-KW"/>
</dbReference>
<dbReference type="InterPro" id="IPR005167">
    <property type="entry name" value="Bunya_G1"/>
</dbReference>
<dbReference type="InterPro" id="IPR005168">
    <property type="entry name" value="Bunya_G2"/>
</dbReference>
<dbReference type="InterPro" id="IPR026400">
    <property type="entry name" value="Bunya_nonstruc_pro_NSm"/>
</dbReference>
<dbReference type="InterPro" id="IPR014413">
    <property type="entry name" value="M_poly_OrthobunV"/>
</dbReference>
<dbReference type="NCBIfam" id="TIGR04210">
    <property type="entry name" value="bunya_NSm"/>
    <property type="match status" value="1"/>
</dbReference>
<dbReference type="Pfam" id="PF03557">
    <property type="entry name" value="Bunya_G1"/>
    <property type="match status" value="1"/>
</dbReference>
<dbReference type="Pfam" id="PF03563">
    <property type="entry name" value="Bunya_G2"/>
    <property type="match status" value="1"/>
</dbReference>
<dbReference type="PIRSF" id="PIRSF003944">
    <property type="entry name" value="M_poly_OrthobunV"/>
    <property type="match status" value="1"/>
</dbReference>
<organismHost>
    <name type="scientific">Culex</name>
    <dbReference type="NCBI Taxonomy" id="53527"/>
</organismHost>
<name>GP_BUNGE</name>
<accession>P12430</accession>
<proteinExistence type="inferred from homology"/>
<protein>
    <recommendedName>
        <fullName>Envelopment polyprotein</fullName>
    </recommendedName>
    <alternativeName>
        <fullName>M polyprotein</fullName>
    </alternativeName>
    <component>
        <recommendedName>
            <fullName evidence="2">Glycoprotein N</fullName>
            <shortName>Gn</shortName>
        </recommendedName>
        <alternativeName>
            <fullName>Glycoprotein G2</fullName>
        </alternativeName>
    </component>
    <component>
        <recommendedName>
            <fullName evidence="2">Non-structural protein M</fullName>
            <shortName>NSm</shortName>
        </recommendedName>
    </component>
    <component>
        <recommendedName>
            <fullName evidence="2">Glycoprotein C</fullName>
            <shortName>Gc</shortName>
        </recommendedName>
        <alternativeName>
            <fullName>Glycoprotein G1</fullName>
        </alternativeName>
    </component>
</protein>
<keyword id="KW-1170">Fusion of virus membrane with host endosomal membrane</keyword>
<keyword id="KW-1168">Fusion of virus membrane with host membrane</keyword>
<keyword id="KW-0325">Glycoprotein</keyword>
<keyword id="KW-1038">Host endoplasmic reticulum</keyword>
<keyword id="KW-1040">Host Golgi apparatus</keyword>
<keyword id="KW-1043">Host membrane</keyword>
<keyword id="KW-0945">Host-virus interaction</keyword>
<keyword id="KW-0472">Membrane</keyword>
<keyword id="KW-0732">Signal</keyword>
<keyword id="KW-0812">Transmembrane</keyword>
<keyword id="KW-1133">Transmembrane helix</keyword>
<keyword id="KW-1161">Viral attachment to host cell</keyword>
<keyword id="KW-1162">Viral penetration into host cytoplasm</keyword>
<keyword id="KW-0946">Virion</keyword>
<keyword id="KW-1160">Virus entry into host cell</keyword>
<sequence>MAISTSLLIVALLIKLCLVNTAPPISKCFQDGILIAELKSSSGISEFCIKDDISILKSEITYSKNDTGIFMHSKVFRHWTVADWKQCNHTSAGGSTNVLEVDKNLNLVAKNYMCTRPCVITIDKENAQLLFQTEQLNQFEVTGTTISTGWFKSKTSVSLDNTCEHIKVTCGKKSLQFHACFKQHMSCVRFLHRSVLPGYMASSICQNIELIIIIILTLAIFIFMCIITRTYICYLMLPLFAPIAYLYGWLYNRSCKKCICCGLAYHPFTNCGSYCVCGSRFETSDRMRLHRESGLCQGFKSLRVARSLCKSKGSSLVISILTAMLILSFITPLEAMTTNYPDDKKFTLKEVNDIVLGRDMEQELKSSILILMSICGIGIILIFFGLTVLLEIVLELIAKRSTIFCKECNLIHDKKSMTYRGDFTNKCGFCPCGELEDPEGLVIHTTRKSCTYYIKIRNLKLIMLIFSIVILMQNATMLVVAGENCWTNTEIKADCVGPLIGPSACTNKGSKTYKTVAQELVTASKITQLDADKYVLLGDTIESALDAITSQKHYSAMHLLETMFLMKHCDYYKVYEHNSGYSQTKWRLIAIANSFDICTNTPTPNFCKCLSDSSCSTTTLNFATSMNATYTSKVEFFNHDFTLFLDIFEAAFPGSATAFLFKKIKEKNPYQAFEMMGKIANKYPNNKLLVVILKYGQYMVGLSHASTYQLKQEWVAKSLSLTRAQRTGLKMSMANAEPGPATKECSDAKTIACLTPKFQVEVNNLMSCGASPNFKIYVKTGELYKAHDRNSVWCLNDMHCLTPYTPANAEIITTMKKMDCWQDNPKQPTDEYAIPKRSCQMKDRGLCNSGADKWKIIKCDNHKLFYTDALERRDPASIVGSNHCFSEKCQIERYPINPTSLTNCEWLYRAVRPEYIKKLSLQTIEEYKKAIADKLTHTLQLYHFAPLLENLPHIKPTYKYITAQGTYTADGIEGASITTSIPALSGTSVGFKINAKDGTDLLDIVVYIKASVVKSIYNHIYDTGPTININSKHDELCTGQCPKKIPADPNWLTFSQERTSRWGCEEFGCLAINTGCVYGSCQDVIRTETKVYRKANEETVMLTVCITYPGHTFCTDVNAHEPKITDELELQFKTIDIKSLPNLVAVTNHKLYTGQINDLGTFGQMCGNVQKTNTSHTGAGTPKFDYTCYSASRKDIIIRRCYNNNYDSCRLLNQESDLLFDDNHETLVVYNNKRLNGELALKLLLGDIQYKLYTENMELELEAKCVGCVGCFESYQCNLQITSSLDETALYLVPVSHFHDRIQIKTTKKDYAMKISCTRDPGDKASFRVCGKSYDFNFHTVPKNDKIEVNVGDETSYIKEKDNRCGRWLCRVRDEGLSVIFEPLNNFFGNYLNMFLYILGGIILLFLALYILMPMCARLRDELKRNERLHQMEMKKR</sequence>
<comment type="function">
    <text evidence="1">Glycoprotein C and Glycoprotein N interact with each other and are present at the surface of the virion. They are able to attach the virion to a cell receptor and to promote fusion of membranes after endocytosis of the virion (By similarity).</text>
</comment>
<comment type="subunit">
    <text evidence="1">Glycoprotein C and Glycoprotein N interact with each other.</text>
</comment>
<comment type="subcellular location">
    <molecule>Glycoprotein C</molecule>
    <subcellularLocation>
        <location evidence="4">Virion membrane</location>
        <topology evidence="4">Single-pass type I membrane protein</topology>
    </subcellularLocation>
    <subcellularLocation>
        <location evidence="4">Host Golgi apparatus membrane</location>
        <topology evidence="4">Single-pass type I membrane protein</topology>
    </subcellularLocation>
    <subcellularLocation>
        <location evidence="4">Host endoplasmic reticulum membrane</location>
        <topology evidence="4">Single-pass type I membrane protein</topology>
    </subcellularLocation>
    <text evidence="1">Glycoprotein C alone is retained in the membrane of the endoplasmic reticulum, but not transported to the Golgi. Coexpression of Glycoprotein C and Glycoprotein N results in efficient transport of Glycoprotein C to the Golgi complex, indicating that their interaction is essential for proper targeting to this organelle, where virion budding occurs (By similarity).</text>
</comment>
<comment type="subcellular location">
    <molecule>Glycoprotein N</molecule>
    <subcellularLocation>
        <location evidence="4">Virion membrane</location>
        <topology evidence="4">Single-pass type I membrane protein</topology>
    </subcellularLocation>
    <subcellularLocation>
        <location evidence="4">Host Golgi apparatus membrane</location>
        <topology evidence="4">Single-pass type I membrane protein</topology>
    </subcellularLocation>
    <text evidence="1">Glycoprotein N is retained in the Golgi complex through a Golgi retention signal, which resides in the Glycoprotein N transmembrane region.</text>
</comment>
<comment type="subcellular location">
    <molecule>Non-structural protein M</molecule>
    <subcellularLocation>
        <location evidence="4">Host Golgi apparatus membrane</location>
        <topology evidence="4">Multi-pass membrane protein</topology>
    </subcellularLocation>
</comment>
<comment type="PTM">
    <text>Specific enzymatic cleavages in vivo yield mature proteins including nonstructural protein NSm, Glycoprotein C, and Glycoprotein N.</text>
</comment>
<comment type="similarity">
    <text evidence="4">Belongs to the orthobunyavirus envelope glycoprotein family.</text>
</comment>
<gene>
    <name type="primary">GP</name>
</gene>
<organism>
    <name type="scientific">Bunyavirus germiston</name>
    <dbReference type="NCBI Taxonomy" id="11574"/>
    <lineage>
        <taxon>Viruses</taxon>
        <taxon>Riboviria</taxon>
        <taxon>Orthornavirae</taxon>
        <taxon>Negarnaviricota</taxon>
        <taxon>Polyploviricotina</taxon>
        <taxon>Ellioviricetes</taxon>
        <taxon>Bunyavirales</taxon>
        <taxon>Peribunyaviridae</taxon>
        <taxon>Orthobunyavirus</taxon>
        <taxon>Orthobunyavirus bunyamweraense</taxon>
    </lineage>
</organism>
<evidence type="ECO:0000250" key="1"/>
<evidence type="ECO:0000250" key="2">
    <source>
        <dbReference type="UniProtKB" id="P04505"/>
    </source>
</evidence>
<evidence type="ECO:0000255" key="3"/>
<evidence type="ECO:0000305" key="4"/>
<reference key="1">
    <citation type="journal article" date="1988" name="Virus Res.">
        <title>Nucleotide sequence of the M segment of Germiston virus: comparison of the M gene product of several bunyaviruses.</title>
        <authorList>
            <person name="Pardigon N."/>
            <person name="Vialat P."/>
            <person name="Gerbaud S."/>
            <person name="Girard M."/>
            <person name="Bouloy M."/>
        </authorList>
    </citation>
    <scope>NUCLEOTIDE SEQUENCE [GENOMIC RNA]</scope>
</reference>
<feature type="signal peptide" evidence="3">
    <location>
        <begin position="1"/>
        <end position="21"/>
    </location>
</feature>
<feature type="chain" id="PRO_0000036786" description="Envelopment polyprotein">
    <location>
        <begin position="22"/>
        <end position="1437"/>
    </location>
</feature>
<feature type="chain" id="PRO_0000036787" description="Glycoprotein N" evidence="1">
    <location>
        <begin position="22"/>
        <end position="306"/>
    </location>
</feature>
<feature type="chain" id="PRO_0000036788" description="Non-structural protein M" evidence="1">
    <location>
        <begin position="307"/>
        <end position="481"/>
    </location>
</feature>
<feature type="chain" id="PRO_0000036789" description="Glycoprotein C" evidence="1">
    <location>
        <begin position="482"/>
        <end position="1437"/>
    </location>
</feature>
<feature type="topological domain" description="Lumenal" evidence="3">
    <location>
        <begin position="22"/>
        <end position="207"/>
    </location>
</feature>
<feature type="transmembrane region" description="Helical" evidence="3">
    <location>
        <begin position="208"/>
        <end position="228"/>
    </location>
</feature>
<feature type="topological domain" description="Cytoplasmic" evidence="3">
    <location>
        <begin position="229"/>
        <end position="312"/>
    </location>
</feature>
<feature type="transmembrane region" description="Helical" evidence="3">
    <location>
        <begin position="313"/>
        <end position="333"/>
    </location>
</feature>
<feature type="topological domain" description="Lumenal" evidence="3">
    <location>
        <begin position="334"/>
        <end position="373"/>
    </location>
</feature>
<feature type="transmembrane region" description="Helical" evidence="3">
    <location>
        <begin position="374"/>
        <end position="394"/>
    </location>
</feature>
<feature type="topological domain" description="Cytoplasmic" evidence="3">
    <location>
        <begin position="395"/>
        <end position="460"/>
    </location>
</feature>
<feature type="transmembrane region" description="Helical" evidence="3">
    <location>
        <begin position="461"/>
        <end position="481"/>
    </location>
</feature>
<feature type="topological domain" description="Lumenal" evidence="3">
    <location>
        <begin position="482"/>
        <end position="1391"/>
    </location>
</feature>
<feature type="transmembrane region" description="Helical" evidence="3">
    <location>
        <begin position="1392"/>
        <end position="1412"/>
    </location>
</feature>
<feature type="topological domain" description="Cytoplasmic" evidence="3">
    <location>
        <begin position="1413"/>
        <end position="1437"/>
    </location>
</feature>
<feature type="site" description="Cleavage; by host signal peptidase" evidence="1">
    <location>
        <begin position="481"/>
        <end position="482"/>
    </location>
</feature>
<feature type="glycosylation site" description="N-linked (GlcNAc...) asparagine; by host" evidence="3">
    <location>
        <position position="65"/>
    </location>
</feature>
<feature type="glycosylation site" description="N-linked (GlcNAc...) asparagine; by host" evidence="3">
    <location>
        <position position="88"/>
    </location>
</feature>
<feature type="glycosylation site" description="N-linked (GlcNAc...) asparagine; by host" evidence="3">
    <location>
        <position position="627"/>
    </location>
</feature>
<feature type="glycosylation site" description="N-linked (GlcNAc...) asparagine; by host" evidence="3">
    <location>
        <position position="1173"/>
    </location>
</feature>